<dbReference type="EMBL" id="BX248357">
    <property type="protein sequence ID" value="CAE49681.1"/>
    <property type="molecule type" value="Genomic_DNA"/>
</dbReference>
<dbReference type="RefSeq" id="WP_003851299.1">
    <property type="nucleotide sequence ID" value="NC_002935.2"/>
</dbReference>
<dbReference type="SMR" id="Q6NHH6"/>
<dbReference type="STRING" id="257309.DIP1161"/>
<dbReference type="GeneID" id="97331912"/>
<dbReference type="KEGG" id="cdi:DIP1161"/>
<dbReference type="HOGENOM" id="CLU_169643_4_2_11"/>
<dbReference type="Proteomes" id="UP000002198">
    <property type="component" value="Chromosome"/>
</dbReference>
<dbReference type="GO" id="GO:0022625">
    <property type="term" value="C:cytosolic large ribosomal subunit"/>
    <property type="evidence" value="ECO:0007669"/>
    <property type="project" value="TreeGrafter"/>
</dbReference>
<dbReference type="GO" id="GO:0003735">
    <property type="term" value="F:structural constituent of ribosome"/>
    <property type="evidence" value="ECO:0007669"/>
    <property type="project" value="InterPro"/>
</dbReference>
<dbReference type="GO" id="GO:0006412">
    <property type="term" value="P:translation"/>
    <property type="evidence" value="ECO:0007669"/>
    <property type="project" value="UniProtKB-UniRule"/>
</dbReference>
<dbReference type="FunFam" id="4.10.410.60:FF:000001">
    <property type="entry name" value="50S ribosomal protein L35"/>
    <property type="match status" value="1"/>
</dbReference>
<dbReference type="Gene3D" id="4.10.410.60">
    <property type="match status" value="1"/>
</dbReference>
<dbReference type="HAMAP" id="MF_00514">
    <property type="entry name" value="Ribosomal_bL35"/>
    <property type="match status" value="1"/>
</dbReference>
<dbReference type="InterPro" id="IPR001706">
    <property type="entry name" value="Ribosomal_bL35"/>
</dbReference>
<dbReference type="InterPro" id="IPR021137">
    <property type="entry name" value="Ribosomal_bL35-like"/>
</dbReference>
<dbReference type="InterPro" id="IPR037229">
    <property type="entry name" value="Ribosomal_bL35_sf"/>
</dbReference>
<dbReference type="NCBIfam" id="TIGR00001">
    <property type="entry name" value="rpmI_bact"/>
    <property type="match status" value="1"/>
</dbReference>
<dbReference type="PANTHER" id="PTHR33343">
    <property type="entry name" value="54S RIBOSOMAL PROTEIN BL35M"/>
    <property type="match status" value="1"/>
</dbReference>
<dbReference type="PANTHER" id="PTHR33343:SF1">
    <property type="entry name" value="LARGE RIBOSOMAL SUBUNIT PROTEIN BL35M"/>
    <property type="match status" value="1"/>
</dbReference>
<dbReference type="Pfam" id="PF01632">
    <property type="entry name" value="Ribosomal_L35p"/>
    <property type="match status" value="1"/>
</dbReference>
<dbReference type="PRINTS" id="PR00064">
    <property type="entry name" value="RIBOSOMALL35"/>
</dbReference>
<dbReference type="SUPFAM" id="SSF143034">
    <property type="entry name" value="L35p-like"/>
    <property type="match status" value="1"/>
</dbReference>
<feature type="chain" id="PRO_0000177353" description="Large ribosomal subunit protein bL35">
    <location>
        <begin position="1"/>
        <end position="64"/>
    </location>
</feature>
<feature type="region of interest" description="Disordered" evidence="2">
    <location>
        <begin position="1"/>
        <end position="50"/>
    </location>
</feature>
<feature type="compositionally biased region" description="Basic residues" evidence="2">
    <location>
        <begin position="1"/>
        <end position="14"/>
    </location>
</feature>
<feature type="compositionally biased region" description="Basic and acidic residues" evidence="2">
    <location>
        <begin position="21"/>
        <end position="36"/>
    </location>
</feature>
<organism>
    <name type="scientific">Corynebacterium diphtheriae (strain ATCC 700971 / NCTC 13129 / Biotype gravis)</name>
    <dbReference type="NCBI Taxonomy" id="257309"/>
    <lineage>
        <taxon>Bacteria</taxon>
        <taxon>Bacillati</taxon>
        <taxon>Actinomycetota</taxon>
        <taxon>Actinomycetes</taxon>
        <taxon>Mycobacteriales</taxon>
        <taxon>Corynebacteriaceae</taxon>
        <taxon>Corynebacterium</taxon>
    </lineage>
</organism>
<accession>Q6NHH6</accession>
<reference key="1">
    <citation type="journal article" date="2003" name="Nucleic Acids Res.">
        <title>The complete genome sequence and analysis of Corynebacterium diphtheriae NCTC13129.</title>
        <authorList>
            <person name="Cerdeno-Tarraga A.-M."/>
            <person name="Efstratiou A."/>
            <person name="Dover L.G."/>
            <person name="Holden M.T.G."/>
            <person name="Pallen M.J."/>
            <person name="Bentley S.D."/>
            <person name="Besra G.S."/>
            <person name="Churcher C.M."/>
            <person name="James K.D."/>
            <person name="De Zoysa A."/>
            <person name="Chillingworth T."/>
            <person name="Cronin A."/>
            <person name="Dowd L."/>
            <person name="Feltwell T."/>
            <person name="Hamlin N."/>
            <person name="Holroyd S."/>
            <person name="Jagels K."/>
            <person name="Moule S."/>
            <person name="Quail M.A."/>
            <person name="Rabbinowitsch E."/>
            <person name="Rutherford K.M."/>
            <person name="Thomson N.R."/>
            <person name="Unwin L."/>
            <person name="Whitehead S."/>
            <person name="Barrell B.G."/>
            <person name="Parkhill J."/>
        </authorList>
    </citation>
    <scope>NUCLEOTIDE SEQUENCE [LARGE SCALE GENOMIC DNA]</scope>
    <source>
        <strain>ATCC 700971 / NCTC 13129 / Biotype gravis</strain>
    </source>
</reference>
<evidence type="ECO:0000255" key="1">
    <source>
        <dbReference type="HAMAP-Rule" id="MF_00514"/>
    </source>
</evidence>
<evidence type="ECO:0000256" key="2">
    <source>
        <dbReference type="SAM" id="MobiDB-lite"/>
    </source>
</evidence>
<evidence type="ECO:0000305" key="3"/>
<proteinExistence type="inferred from homology"/>
<gene>
    <name evidence="1" type="primary">rpmI</name>
    <name type="ordered locus">DIP1161</name>
</gene>
<keyword id="KW-1185">Reference proteome</keyword>
<keyword id="KW-0687">Ribonucleoprotein</keyword>
<keyword id="KW-0689">Ribosomal protein</keyword>
<name>RL35_CORDI</name>
<protein>
    <recommendedName>
        <fullName evidence="1">Large ribosomal subunit protein bL35</fullName>
    </recommendedName>
    <alternativeName>
        <fullName evidence="3">50S ribosomal protein L35</fullName>
    </alternativeName>
</protein>
<sequence>MKQKTHKGTAKRVKITGSGKLRREQANRRHLLEGKPSKRTRRLKGTEDVAKADTKRIKRLLGKA</sequence>
<comment type="similarity">
    <text evidence="1">Belongs to the bacterial ribosomal protein bL35 family.</text>
</comment>